<reference key="1">
    <citation type="journal article" date="2004" name="Nat. Biotechnol.">
        <title>The genome sequence of the anaerobic, sulfate-reducing bacterium Desulfovibrio vulgaris Hildenborough.</title>
        <authorList>
            <person name="Heidelberg J.F."/>
            <person name="Seshadri R."/>
            <person name="Haveman S.A."/>
            <person name="Hemme C.L."/>
            <person name="Paulsen I.T."/>
            <person name="Kolonay J.F."/>
            <person name="Eisen J.A."/>
            <person name="Ward N.L."/>
            <person name="Methe B.A."/>
            <person name="Brinkac L.M."/>
            <person name="Daugherty S.C."/>
            <person name="DeBoy R.T."/>
            <person name="Dodson R.J."/>
            <person name="Durkin A.S."/>
            <person name="Madupu R."/>
            <person name="Nelson W.C."/>
            <person name="Sullivan S.A."/>
            <person name="Fouts D.E."/>
            <person name="Haft D.H."/>
            <person name="Selengut J."/>
            <person name="Peterson J.D."/>
            <person name="Davidsen T.M."/>
            <person name="Zafar N."/>
            <person name="Zhou L."/>
            <person name="Radune D."/>
            <person name="Dimitrov G."/>
            <person name="Hance M."/>
            <person name="Tran K."/>
            <person name="Khouri H.M."/>
            <person name="Gill J."/>
            <person name="Utterback T.R."/>
            <person name="Feldblyum T.V."/>
            <person name="Wall J.D."/>
            <person name="Voordouw G."/>
            <person name="Fraser C.M."/>
        </authorList>
    </citation>
    <scope>NUCLEOTIDE SEQUENCE [LARGE SCALE GENOMIC DNA]</scope>
    <source>
        <strain>ATCC 29579 / DSM 644 / CCUG 34227 / NCIMB 8303 / VKM B-1760 / Hildenborough</strain>
    </source>
</reference>
<feature type="chain" id="PRO_0000241342" description="Large ribosomal subunit protein uL3">
    <location>
        <begin position="1"/>
        <end position="209"/>
    </location>
</feature>
<protein>
    <recommendedName>
        <fullName evidence="1">Large ribosomal subunit protein uL3</fullName>
    </recommendedName>
    <alternativeName>
        <fullName evidence="2">50S ribosomal protein L3</fullName>
    </alternativeName>
</protein>
<keyword id="KW-1185">Reference proteome</keyword>
<keyword id="KW-0687">Ribonucleoprotein</keyword>
<keyword id="KW-0689">Ribosomal protein</keyword>
<keyword id="KW-0694">RNA-binding</keyword>
<keyword id="KW-0699">rRNA-binding</keyword>
<evidence type="ECO:0000255" key="1">
    <source>
        <dbReference type="HAMAP-Rule" id="MF_01325"/>
    </source>
</evidence>
<evidence type="ECO:0000305" key="2"/>
<comment type="function">
    <text evidence="1">One of the primary rRNA binding proteins, it binds directly near the 3'-end of the 23S rRNA, where it nucleates assembly of the 50S subunit.</text>
</comment>
<comment type="subunit">
    <text evidence="1">Part of the 50S ribosomal subunit. Forms a cluster with proteins L14 and L19.</text>
</comment>
<comment type="similarity">
    <text evidence="1">Belongs to the universal ribosomal protein uL3 family.</text>
</comment>
<proteinExistence type="inferred from homology"/>
<name>RL3_NITV2</name>
<organism>
    <name type="scientific">Nitratidesulfovibrio vulgaris (strain ATCC 29579 / DSM 644 / CCUG 34227 / NCIMB 8303 / VKM B-1760 / Hildenborough)</name>
    <name type="common">Desulfovibrio vulgaris</name>
    <dbReference type="NCBI Taxonomy" id="882"/>
    <lineage>
        <taxon>Bacteria</taxon>
        <taxon>Pseudomonadati</taxon>
        <taxon>Thermodesulfobacteriota</taxon>
        <taxon>Desulfovibrionia</taxon>
        <taxon>Desulfovibrionales</taxon>
        <taxon>Desulfovibrionaceae</taxon>
        <taxon>Nitratidesulfovibrio</taxon>
    </lineage>
</organism>
<sequence>MAEKMGILGRKIGVTRIFASDGSAVAVTVIKAGPCPVTQVKTVATDGYDAIQIAFDEAKEKHLNKPEIGHLAKAGKGLFRTLREIRLEAPAAYEVGSELDVTLFATGDRVKVSGTSIGKGYQGVMRRWNFAGSKDTHGCEKVHRSGGSIGNNTFPGHVFKGKKMAGHWGNESVTVLNLEVVDVRPEDNVILVKGSVPGPKNGLVMVRKQ</sequence>
<dbReference type="EMBL" id="AE017285">
    <property type="protein sequence ID" value="AAS95781.1"/>
    <property type="molecule type" value="Genomic_DNA"/>
</dbReference>
<dbReference type="RefSeq" id="WP_010938598.1">
    <property type="nucleotide sequence ID" value="NC_002937.3"/>
</dbReference>
<dbReference type="RefSeq" id="YP_010522.1">
    <property type="nucleotide sequence ID" value="NC_002937.3"/>
</dbReference>
<dbReference type="SMR" id="Q72CI0"/>
<dbReference type="STRING" id="882.DVU_1303"/>
<dbReference type="PaxDb" id="882-DVU_1303"/>
<dbReference type="EnsemblBacteria" id="AAS95781">
    <property type="protein sequence ID" value="AAS95781"/>
    <property type="gene ID" value="DVU_1303"/>
</dbReference>
<dbReference type="KEGG" id="dvu:DVU_1303"/>
<dbReference type="PATRIC" id="fig|882.5.peg.1215"/>
<dbReference type="eggNOG" id="COG0087">
    <property type="taxonomic scope" value="Bacteria"/>
</dbReference>
<dbReference type="HOGENOM" id="CLU_044142_4_1_7"/>
<dbReference type="OrthoDB" id="9806135at2"/>
<dbReference type="PhylomeDB" id="Q72CI0"/>
<dbReference type="Proteomes" id="UP000002194">
    <property type="component" value="Chromosome"/>
</dbReference>
<dbReference type="GO" id="GO:0022625">
    <property type="term" value="C:cytosolic large ribosomal subunit"/>
    <property type="evidence" value="ECO:0007669"/>
    <property type="project" value="TreeGrafter"/>
</dbReference>
<dbReference type="GO" id="GO:0019843">
    <property type="term" value="F:rRNA binding"/>
    <property type="evidence" value="ECO:0007669"/>
    <property type="project" value="UniProtKB-UniRule"/>
</dbReference>
<dbReference type="GO" id="GO:0003735">
    <property type="term" value="F:structural constituent of ribosome"/>
    <property type="evidence" value="ECO:0007669"/>
    <property type="project" value="InterPro"/>
</dbReference>
<dbReference type="GO" id="GO:0006412">
    <property type="term" value="P:translation"/>
    <property type="evidence" value="ECO:0007669"/>
    <property type="project" value="UniProtKB-UniRule"/>
</dbReference>
<dbReference type="FunFam" id="2.40.30.10:FF:000004">
    <property type="entry name" value="50S ribosomal protein L3"/>
    <property type="match status" value="1"/>
</dbReference>
<dbReference type="FunFam" id="3.30.160.810:FF:000001">
    <property type="entry name" value="50S ribosomal protein L3"/>
    <property type="match status" value="1"/>
</dbReference>
<dbReference type="Gene3D" id="3.30.160.810">
    <property type="match status" value="1"/>
</dbReference>
<dbReference type="Gene3D" id="2.40.30.10">
    <property type="entry name" value="Translation factors"/>
    <property type="match status" value="1"/>
</dbReference>
<dbReference type="HAMAP" id="MF_01325_B">
    <property type="entry name" value="Ribosomal_uL3_B"/>
    <property type="match status" value="1"/>
</dbReference>
<dbReference type="InterPro" id="IPR000597">
    <property type="entry name" value="Ribosomal_uL3"/>
</dbReference>
<dbReference type="InterPro" id="IPR019927">
    <property type="entry name" value="Ribosomal_uL3_bac/org-type"/>
</dbReference>
<dbReference type="InterPro" id="IPR009000">
    <property type="entry name" value="Transl_B-barrel_sf"/>
</dbReference>
<dbReference type="NCBIfam" id="TIGR03625">
    <property type="entry name" value="L3_bact"/>
    <property type="match status" value="1"/>
</dbReference>
<dbReference type="PANTHER" id="PTHR11229">
    <property type="entry name" value="50S RIBOSOMAL PROTEIN L3"/>
    <property type="match status" value="1"/>
</dbReference>
<dbReference type="PANTHER" id="PTHR11229:SF16">
    <property type="entry name" value="LARGE RIBOSOMAL SUBUNIT PROTEIN UL3C"/>
    <property type="match status" value="1"/>
</dbReference>
<dbReference type="Pfam" id="PF00297">
    <property type="entry name" value="Ribosomal_L3"/>
    <property type="match status" value="1"/>
</dbReference>
<dbReference type="SUPFAM" id="SSF50447">
    <property type="entry name" value="Translation proteins"/>
    <property type="match status" value="1"/>
</dbReference>
<accession>Q72CI0</accession>
<gene>
    <name evidence="1" type="primary">rplC</name>
    <name type="ordered locus">DVU_1303</name>
</gene>